<gene>
    <name type="primary">DSTN</name>
</gene>
<dbReference type="EMBL" id="BT020985">
    <property type="protein sequence ID" value="AAX09002.1"/>
    <property type="molecule type" value="mRNA"/>
</dbReference>
<dbReference type="EMBL" id="BC103074">
    <property type="protein sequence ID" value="AAI03075.1"/>
    <property type="molecule type" value="mRNA"/>
</dbReference>
<dbReference type="RefSeq" id="NP_001015586.1">
    <property type="nucleotide sequence ID" value="NM_001015586.1"/>
</dbReference>
<dbReference type="SMR" id="Q5E9D5"/>
<dbReference type="FunCoup" id="Q5E9D5">
    <property type="interactions" value="2234"/>
</dbReference>
<dbReference type="STRING" id="9913.ENSBTAP00000067752"/>
<dbReference type="PaxDb" id="9913-ENSBTAP00000020512"/>
<dbReference type="PeptideAtlas" id="Q5E9D5"/>
<dbReference type="Ensembl" id="ENSBTAT00000020512.5">
    <property type="protein sequence ID" value="ENSBTAP00000020512.3"/>
    <property type="gene ID" value="ENSBTAG00000015434.5"/>
</dbReference>
<dbReference type="GeneID" id="513267"/>
<dbReference type="KEGG" id="bta:513267"/>
<dbReference type="CTD" id="11034"/>
<dbReference type="VEuPathDB" id="HostDB:ENSBTAG00000015434"/>
<dbReference type="VGNC" id="VGNC:28226">
    <property type="gene designation" value="DSTN"/>
</dbReference>
<dbReference type="eggNOG" id="KOG1735">
    <property type="taxonomic scope" value="Eukaryota"/>
</dbReference>
<dbReference type="GeneTree" id="ENSGT00950000183000"/>
<dbReference type="HOGENOM" id="CLU_094004_0_0_1"/>
<dbReference type="InParanoid" id="Q5E9D5"/>
<dbReference type="OMA" id="ITFYSWS"/>
<dbReference type="OrthoDB" id="10249245at2759"/>
<dbReference type="TreeFam" id="TF328601"/>
<dbReference type="Proteomes" id="UP000009136">
    <property type="component" value="Chromosome 13"/>
</dbReference>
<dbReference type="GO" id="GO:0015629">
    <property type="term" value="C:actin cytoskeleton"/>
    <property type="evidence" value="ECO:0000318"/>
    <property type="project" value="GO_Central"/>
</dbReference>
<dbReference type="GO" id="GO:0030864">
    <property type="term" value="C:cortical actin cytoskeleton"/>
    <property type="evidence" value="ECO:0000250"/>
    <property type="project" value="AgBase"/>
</dbReference>
<dbReference type="GO" id="GO:0005737">
    <property type="term" value="C:cytoplasm"/>
    <property type="evidence" value="ECO:0000250"/>
    <property type="project" value="AgBase"/>
</dbReference>
<dbReference type="GO" id="GO:0051015">
    <property type="term" value="F:actin filament binding"/>
    <property type="evidence" value="ECO:0000250"/>
    <property type="project" value="UniProtKB"/>
</dbReference>
<dbReference type="GO" id="GO:0030043">
    <property type="term" value="P:actin filament fragmentation"/>
    <property type="evidence" value="ECO:0000318"/>
    <property type="project" value="GO_Central"/>
</dbReference>
<dbReference type="GO" id="GO:0051014">
    <property type="term" value="P:actin filament severing"/>
    <property type="evidence" value="ECO:0000318"/>
    <property type="project" value="GO_Central"/>
</dbReference>
<dbReference type="GO" id="GO:0030836">
    <property type="term" value="P:positive regulation of actin filament depolymerization"/>
    <property type="evidence" value="ECO:0000250"/>
    <property type="project" value="AgBase"/>
</dbReference>
<dbReference type="CDD" id="cd11286">
    <property type="entry name" value="ADF_cofilin_like"/>
    <property type="match status" value="1"/>
</dbReference>
<dbReference type="FunFam" id="3.40.20.10:FF:000010">
    <property type="entry name" value="Putative destrin"/>
    <property type="match status" value="1"/>
</dbReference>
<dbReference type="Gene3D" id="3.40.20.10">
    <property type="entry name" value="Severin"/>
    <property type="match status" value="1"/>
</dbReference>
<dbReference type="InterPro" id="IPR002108">
    <property type="entry name" value="ADF-H"/>
</dbReference>
<dbReference type="InterPro" id="IPR029006">
    <property type="entry name" value="ADF-H/Gelsolin-like_dom_sf"/>
</dbReference>
<dbReference type="InterPro" id="IPR017904">
    <property type="entry name" value="ADF/Cofilin"/>
</dbReference>
<dbReference type="PANTHER" id="PTHR11913">
    <property type="entry name" value="COFILIN-RELATED"/>
    <property type="match status" value="1"/>
</dbReference>
<dbReference type="Pfam" id="PF00241">
    <property type="entry name" value="Cofilin_ADF"/>
    <property type="match status" value="1"/>
</dbReference>
<dbReference type="PRINTS" id="PR00006">
    <property type="entry name" value="COFILIN"/>
</dbReference>
<dbReference type="SMART" id="SM00102">
    <property type="entry name" value="ADF"/>
    <property type="match status" value="1"/>
</dbReference>
<dbReference type="SUPFAM" id="SSF55753">
    <property type="entry name" value="Actin depolymerizing proteins"/>
    <property type="match status" value="1"/>
</dbReference>
<dbReference type="PROSITE" id="PS51263">
    <property type="entry name" value="ADF_H"/>
    <property type="match status" value="1"/>
</dbReference>
<organism>
    <name type="scientific">Bos taurus</name>
    <name type="common">Bovine</name>
    <dbReference type="NCBI Taxonomy" id="9913"/>
    <lineage>
        <taxon>Eukaryota</taxon>
        <taxon>Metazoa</taxon>
        <taxon>Chordata</taxon>
        <taxon>Craniata</taxon>
        <taxon>Vertebrata</taxon>
        <taxon>Euteleostomi</taxon>
        <taxon>Mammalia</taxon>
        <taxon>Eutheria</taxon>
        <taxon>Laurasiatheria</taxon>
        <taxon>Artiodactyla</taxon>
        <taxon>Ruminantia</taxon>
        <taxon>Pecora</taxon>
        <taxon>Bovidae</taxon>
        <taxon>Bovinae</taxon>
        <taxon>Bos</taxon>
    </lineage>
</organism>
<comment type="function">
    <text evidence="1 2">Actin-depolymerizing protein. Severs actin filaments (F-actin) and binds to actin monomers (G-actin). Acts in a pH-independent manner.</text>
</comment>
<comment type="PTM">
    <text evidence="1">ISGylated.</text>
</comment>
<comment type="similarity">
    <text evidence="5">Belongs to the actin-binding proteins ADF family.</text>
</comment>
<accession>Q5E9D5</accession>
<accession>Q3SZ77</accession>
<feature type="initiator methionine" description="Removed" evidence="1">
    <location>
        <position position="1"/>
    </location>
</feature>
<feature type="chain" id="PRO_0000214917" description="Destrin">
    <location>
        <begin position="2"/>
        <end position="165"/>
    </location>
</feature>
<feature type="domain" description="ADF-H" evidence="4">
    <location>
        <begin position="4"/>
        <end position="153"/>
    </location>
</feature>
<feature type="short sequence motif" description="Nuclear localization signal" evidence="3">
    <location>
        <begin position="30"/>
        <end position="34"/>
    </location>
</feature>
<feature type="modified residue" description="N-acetylalanine" evidence="1">
    <location>
        <position position="2"/>
    </location>
</feature>
<feature type="modified residue" description="Phosphoserine" evidence="1">
    <location>
        <position position="3"/>
    </location>
</feature>
<feature type="modified residue" description="N6-acetyllysine" evidence="1">
    <location>
        <position position="19"/>
    </location>
</feature>
<feature type="sequence conflict" description="In Ref. 2; AAI03075." evidence="5" ref="2">
    <original>A</original>
    <variation>D</variation>
    <location>
        <position position="2"/>
    </location>
</feature>
<protein>
    <recommendedName>
        <fullName>Destrin</fullName>
    </recommendedName>
    <alternativeName>
        <fullName>Actin-depolymerizing factor</fullName>
        <shortName>ADF</shortName>
    </alternativeName>
</protein>
<proteinExistence type="evidence at transcript level"/>
<reference key="1">
    <citation type="journal article" date="2005" name="BMC Genomics">
        <title>Characterization of 954 bovine full-CDS cDNA sequences.</title>
        <authorList>
            <person name="Harhay G.P."/>
            <person name="Sonstegard T.S."/>
            <person name="Keele J.W."/>
            <person name="Heaton M.P."/>
            <person name="Clawson M.L."/>
            <person name="Snelling W.M."/>
            <person name="Wiedmann R.T."/>
            <person name="Van Tassell C.P."/>
            <person name="Smith T.P.L."/>
        </authorList>
    </citation>
    <scope>NUCLEOTIDE SEQUENCE [LARGE SCALE MRNA]</scope>
</reference>
<reference key="2">
    <citation type="submission" date="2005-08" db="EMBL/GenBank/DDBJ databases">
        <authorList>
            <consortium name="NIH - Mammalian Gene Collection (MGC) project"/>
        </authorList>
    </citation>
    <scope>NUCLEOTIDE SEQUENCE [LARGE SCALE MRNA]</scope>
    <source>
        <strain>Crossbred X Angus</strain>
        <tissue>Ileum</tissue>
    </source>
</reference>
<evidence type="ECO:0000250" key="1">
    <source>
        <dbReference type="UniProtKB" id="P60981"/>
    </source>
</evidence>
<evidence type="ECO:0000250" key="2">
    <source>
        <dbReference type="UniProtKB" id="Q9R0P5"/>
    </source>
</evidence>
<evidence type="ECO:0000255" key="3"/>
<evidence type="ECO:0000255" key="4">
    <source>
        <dbReference type="PROSITE-ProRule" id="PRU00599"/>
    </source>
</evidence>
<evidence type="ECO:0000305" key="5"/>
<keyword id="KW-0007">Acetylation</keyword>
<keyword id="KW-0009">Actin-binding</keyword>
<keyword id="KW-0597">Phosphoprotein</keyword>
<keyword id="KW-1185">Reference proteome</keyword>
<keyword id="KW-0832">Ubl conjugation</keyword>
<name>DEST_BOVIN</name>
<sequence>MASGVQVADEVCRIFYDMKVRKCSTPEEIKKRKKAVIFCLSADKKCIIVEEGKEILVGDVGVTITDPFKHFVGMLPEKDCRYALYDASFETKESRKEELMFFLWAPELAPLKSKMIYASSKDAIKKKFQGIKHECQANGPEDLNRACIAEKLGGSLIVAFEGCPV</sequence>